<proteinExistence type="uncertain"/>
<gene>
    <name type="primary">bcsQ</name>
    <name type="synonym">yhjQ</name>
    <name type="ordered locus">b3534</name>
</gene>
<keyword id="KW-0067">ATP-binding</keyword>
<keyword id="KW-0547">Nucleotide-binding</keyword>
<keyword id="KW-1185">Reference proteome</keyword>
<feature type="chain" id="PRO_0000169575" description="Putative cellulose biosynthesis protein BcsQ">
    <location>
        <begin position="1"/>
        <end position="242"/>
    </location>
</feature>
<feature type="binding site" evidence="2">
    <location>
        <begin position="1"/>
        <end position="8"/>
    </location>
    <ligand>
        <name>ATP</name>
        <dbReference type="ChEBI" id="CHEBI:30616"/>
    </ligand>
</feature>
<evidence type="ECO:0000250" key="1">
    <source>
        <dbReference type="UniProtKB" id="P0DP92"/>
    </source>
</evidence>
<evidence type="ECO:0000255" key="2"/>
<evidence type="ECO:0000269" key="3">
    <source>
    </source>
</evidence>
<evidence type="ECO:0000305" key="4"/>
<evidence type="ECO:0000305" key="5">
    <source>
    </source>
</evidence>
<sequence length="242" mass="27140">MRGGVGTTTITAALAWSLQMLGENVLVVDACPDNLLRLSFNVDFTHRQGWARAMLDGQDWRDAGLRYTSQLDLLPFGQLSIEEQENPQHWQTRLSDICSGLQQLKASGRYQWILIDLPRDASQITHQLLSLCDHSLAIVNVDANCHIRLHQQALPDGAHILINDFRIGSQVQDDIYQLWLQSQRRLLPMLIHRDEAMAECLAAKQPVGEYRSDALAAEEILTLANWCLLNYSGLKTPVGSAS</sequence>
<dbReference type="EMBL" id="U00039">
    <property type="protein sequence ID" value="AAB18512.1"/>
    <property type="molecule type" value="Genomic_DNA"/>
</dbReference>
<dbReference type="EMBL" id="U00096">
    <property type="status" value="NOT_ANNOTATED_CDS"/>
    <property type="molecule type" value="Genomic_DNA"/>
</dbReference>
<dbReference type="PIR" id="S47756">
    <property type="entry name" value="S47756"/>
</dbReference>
<dbReference type="RefSeq" id="WP_011310329.1">
    <property type="nucleotide sequence ID" value="NZ_LN832404.1"/>
</dbReference>
<dbReference type="SMR" id="P37655"/>
<dbReference type="DIP" id="DIP-12388N"/>
<dbReference type="FunCoup" id="P37655">
    <property type="interactions" value="51"/>
</dbReference>
<dbReference type="IntAct" id="P37655">
    <property type="interactions" value="2"/>
</dbReference>
<dbReference type="jPOST" id="P37655"/>
<dbReference type="KEGG" id="ecoc:C3026_19145"/>
<dbReference type="EchoBASE" id="EB2170"/>
<dbReference type="InParanoid" id="P37655"/>
<dbReference type="OrthoDB" id="5288747at2"/>
<dbReference type="PhylomeDB" id="P37655"/>
<dbReference type="Proteomes" id="UP000000625">
    <property type="component" value="Chromosome"/>
</dbReference>
<dbReference type="GO" id="GO:0009898">
    <property type="term" value="C:cytoplasmic side of plasma membrane"/>
    <property type="evidence" value="ECO:0000318"/>
    <property type="project" value="GO_Central"/>
</dbReference>
<dbReference type="GO" id="GO:0005829">
    <property type="term" value="C:cytosol"/>
    <property type="evidence" value="ECO:0000318"/>
    <property type="project" value="GO_Central"/>
</dbReference>
<dbReference type="GO" id="GO:0005524">
    <property type="term" value="F:ATP binding"/>
    <property type="evidence" value="ECO:0000318"/>
    <property type="project" value="GO_Central"/>
</dbReference>
<dbReference type="GO" id="GO:0016887">
    <property type="term" value="F:ATP hydrolysis activity"/>
    <property type="evidence" value="ECO:0000318"/>
    <property type="project" value="GO_Central"/>
</dbReference>
<dbReference type="FunFam" id="3.40.50.300:FF:000943">
    <property type="entry name" value="Cellulose synthase operon protein YhjQ"/>
    <property type="match status" value="1"/>
</dbReference>
<dbReference type="Gene3D" id="3.40.50.300">
    <property type="entry name" value="P-loop containing nucleotide triphosphate hydrolases"/>
    <property type="match status" value="1"/>
</dbReference>
<dbReference type="InterPro" id="IPR017746">
    <property type="entry name" value="Cellulose_synthase_operon_BcsQ"/>
</dbReference>
<dbReference type="InterPro" id="IPR027417">
    <property type="entry name" value="P-loop_NTPase"/>
</dbReference>
<dbReference type="InterPro" id="IPR050625">
    <property type="entry name" value="ParA/MinD_ATPase"/>
</dbReference>
<dbReference type="NCBIfam" id="TIGR03371">
    <property type="entry name" value="cellulose_yhjQ"/>
    <property type="match status" value="1"/>
</dbReference>
<dbReference type="NCBIfam" id="NF007460">
    <property type="entry name" value="PRK10037.1"/>
    <property type="match status" value="1"/>
</dbReference>
<dbReference type="PANTHER" id="PTHR43384:SF4">
    <property type="entry name" value="CELLULOSE BIOSYNTHESIS PROTEIN BCSQ-RELATED"/>
    <property type="match status" value="1"/>
</dbReference>
<dbReference type="PANTHER" id="PTHR43384">
    <property type="entry name" value="SEPTUM SITE-DETERMINING PROTEIN MIND HOMOLOG, CHLOROPLASTIC-RELATED"/>
    <property type="match status" value="1"/>
</dbReference>
<dbReference type="Pfam" id="PF06564">
    <property type="entry name" value="CBP_BcsQ"/>
    <property type="match status" value="1"/>
</dbReference>
<dbReference type="SUPFAM" id="SSF52540">
    <property type="entry name" value="P-loop containing nucleoside triphosphate hydrolases"/>
    <property type="match status" value="1"/>
</dbReference>
<reference key="1">
    <citation type="journal article" date="1994" name="Nucleic Acids Res.">
        <title>Analysis of the Escherichia coli genome. V. DNA sequence of the region from 76.0 to 81.5 minutes.</title>
        <authorList>
            <person name="Sofia H.J."/>
            <person name="Burland V."/>
            <person name="Daniels D.L."/>
            <person name="Plunkett G. III"/>
            <person name="Blattner F.R."/>
        </authorList>
    </citation>
    <scope>NUCLEOTIDE SEQUENCE [LARGE SCALE GENOMIC DNA]</scope>
    <source>
        <strain>K12 / MG1655 / ATCC 47076</strain>
    </source>
</reference>
<reference key="2">
    <citation type="journal article" date="1997" name="Science">
        <title>The complete genome sequence of Escherichia coli K-12.</title>
        <authorList>
            <person name="Blattner F.R."/>
            <person name="Plunkett G. III"/>
            <person name="Bloch C.A."/>
            <person name="Perna N.T."/>
            <person name="Burland V."/>
            <person name="Riley M."/>
            <person name="Collado-Vides J."/>
            <person name="Glasner J.D."/>
            <person name="Rode C.K."/>
            <person name="Mayhew G.F."/>
            <person name="Gregor J."/>
            <person name="Davis N.W."/>
            <person name="Kirkpatrick H.A."/>
            <person name="Goeden M.A."/>
            <person name="Rose D.J."/>
            <person name="Mau B."/>
            <person name="Shao Y."/>
        </authorList>
    </citation>
    <scope>NUCLEOTIDE SEQUENCE [LARGE SCALE GENOMIC DNA]</scope>
    <source>
        <strain>K12 / MG1655 / ATCC 47076</strain>
    </source>
</reference>
<reference key="3">
    <citation type="journal article" date="2013" name="J. Bacteriol.">
        <title>Cellulose as an architectural element in spatially structured Escherichia coli biofilms.</title>
        <authorList>
            <person name="Serra D.O."/>
            <person name="Richter A.M."/>
            <person name="Hengge R."/>
        </authorList>
    </citation>
    <scope>IDENTIFICATION OF MUTATION THAT GENERATES PSEUDOGENE</scope>
    <scope>RESTORATION OF THE READING FRAME AND CELLULOSE PRODUCTION</scope>
    <source>
        <strain>K12 / W3110 / ATCC 27325 / DSM 5911</strain>
    </source>
</reference>
<accession>P37655</accession>
<comment type="function">
    <text evidence="1 5">A C-terminal pseudogene fragment of BcsQ, which has a premature stop codon at position 6 of the intact protein. The mutation prevents cellulose synthesis, and has polar effects on transcription of downstream gene bcsA and probably also bcsB, bcsZ and bcsC (PubMed:24097954). When the reading frame is restored cellulose biosynthesis is also restored, see (AC P0DP92) for an intact protein. May play a role in subcellular localization of an active cellulose biosynthesis apparatus at the bacterial cell pole (By similarity).</text>
</comment>
<comment type="induction">
    <text evidence="3">Part of the yhjR-bcsQABZC operon (PubMed:24097954).</text>
</comment>
<comment type="miscellaneous">
    <text evidence="3">Cellulose production is abolished in E.coli K12 /MG1655 and W3110 due to a premature stop codon in this gene. The sequence given here starts on a GTG codon 6 nucleotides downstream of the premature stop codon.</text>
</comment>
<comment type="similarity">
    <text evidence="4">Belongs to the BcsQ family.</text>
</comment>
<comment type="caution">
    <text evidence="5">Could be the product of a pseudogene. The protein is missing 8 N-terminal amino acids due to a premature stop codon; when the reading frame is restored strain W3110 synthesizes cellulose. See (AC P0DP92) for a functional intact protein.</text>
</comment>
<organism>
    <name type="scientific">Escherichia coli (strain K12)</name>
    <dbReference type="NCBI Taxonomy" id="83333"/>
    <lineage>
        <taxon>Bacteria</taxon>
        <taxon>Pseudomonadati</taxon>
        <taxon>Pseudomonadota</taxon>
        <taxon>Gammaproteobacteria</taxon>
        <taxon>Enterobacterales</taxon>
        <taxon>Enterobacteriaceae</taxon>
        <taxon>Escherichia</taxon>
    </lineage>
</organism>
<name>BCSQP_ECOLI</name>
<protein>
    <recommendedName>
        <fullName>Putative cellulose biosynthesis protein BcsQ</fullName>
    </recommendedName>
</protein>